<sequence>MQKISKYSSMAILRKRPLVKTETGPESELLPEKRTKIKQEEVVPQPVDIDWVKSLPNKQYFEWIVVRNGNVPNRWATPLDPSILVTPASTKVPYKFQETYARMRVLRSKILAPVDIIGGSSIPVTVASKCGISKEQISPRDYRLQVLLGVMLSSQTKDEVTAMAMLNIMRYCIDELHSEEGMTLEAVLQINETKLDELIHSVGFHTRKAKYILSTCKILQDQFSSDVPATINELLGLPGVGPKMAYLTLQKAWGKIEGICVDVHVDRLTKLWKWVDAQKCKTPDQTRTQLQNWLPKGLWTEINGLLVGFGQIITKSRNLGDMLQFLPPDDPRSSLDWDLQSQLYKEIQQNIMSYPKWVKYLEGKRELNVEAEINVKHEEKTVEETMVKLENDISVKVED</sequence>
<evidence type="ECO:0000255" key="1"/>
<evidence type="ECO:0000255" key="2">
    <source>
        <dbReference type="HAMAP-Rule" id="MF_03183"/>
    </source>
</evidence>
<evidence type="ECO:0000269" key="3">
    <source>
    </source>
</evidence>
<evidence type="ECO:0000269" key="4">
    <source>
    </source>
</evidence>
<evidence type="ECO:0000269" key="5">
    <source>
    </source>
</evidence>
<evidence type="ECO:0000269" key="6">
    <source>
    </source>
</evidence>
<evidence type="ECO:0000269" key="7">
    <source>
    </source>
</evidence>
<evidence type="ECO:0000269" key="8">
    <source>
    </source>
</evidence>
<evidence type="ECO:0000269" key="9">
    <source>
    </source>
</evidence>
<evidence type="ECO:0000269" key="10">
    <source>
    </source>
</evidence>
<evidence type="ECO:0000269" key="11">
    <source>
    </source>
</evidence>
<evidence type="ECO:0000269" key="12">
    <source>
    </source>
</evidence>
<evidence type="ECO:0000269" key="13">
    <source>
    </source>
</evidence>
<evidence type="ECO:0000269" key="14">
    <source>
    </source>
</evidence>
<evidence type="ECO:0000269" key="15">
    <source>
    </source>
</evidence>
<evidence type="ECO:0000269" key="16">
    <source>
    </source>
</evidence>
<evidence type="ECO:0000269" key="17">
    <source>
    </source>
</evidence>
<evidence type="ECO:0000269" key="18">
    <source>
    </source>
</evidence>
<evidence type="ECO:0000305" key="19"/>
<evidence type="ECO:0000305" key="20">
    <source>
    </source>
</evidence>
<gene>
    <name evidence="2" type="primary">NTG1</name>
    <name type="synonym">OGG2</name>
    <name type="synonym">SCR1</name>
    <name type="ordered locus">YAL015C</name>
    <name type="ORF">FUN33</name>
</gene>
<comment type="function">
    <text evidence="2 3 4 5 6 9 11 12 13 14 15 16 17 18">Bifunctional DNA N-glycosylase with associated apurinic/apyrimidinic (AP) lyase function that catalyzes the first step in base excision repair (BER), the primary repair pathway for the repair of oxidative DNA damage. The DNA N-glycosylase activity releases the damaged DNA base from DNA by cleaving the N-glycosidic bond, leaving an AP site. The AP-lyase activity cleaves the phosphodiester bond 3' to the AP site by a beta-elimination. Primarily recognizes and repairs oxidative base damage of pyrimidines, but also purine-derived lesions, alkylation damage and cytosine photoproducts generated by UV irradiation as well as abasic sites. Also has 8-oxoguanine DNA glycosylase activity. The AP lyase can incise AP sites opposite all four bases. May also play a role in the regulation of mtDNA copy number by introducing a double-stranded break (DSB) at the mtDNA replication origin ori5, initiating the rolling-circle mtDNA replication.</text>
</comment>
<comment type="catalytic activity">
    <reaction evidence="2 5 12 16">
        <text>2'-deoxyribonucleotide-(2'-deoxyribose 5'-phosphate)-2'-deoxyribonucleotide-DNA = a 3'-end 2'-deoxyribonucleotide-(2,3-dehydro-2,3-deoxyribose 5'-phosphate)-DNA + a 5'-end 5'-phospho-2'-deoxyribonucleoside-DNA + H(+)</text>
        <dbReference type="Rhea" id="RHEA:66592"/>
        <dbReference type="Rhea" id="RHEA-COMP:13180"/>
        <dbReference type="Rhea" id="RHEA-COMP:16897"/>
        <dbReference type="Rhea" id="RHEA-COMP:17067"/>
        <dbReference type="ChEBI" id="CHEBI:15378"/>
        <dbReference type="ChEBI" id="CHEBI:136412"/>
        <dbReference type="ChEBI" id="CHEBI:157695"/>
        <dbReference type="ChEBI" id="CHEBI:167181"/>
        <dbReference type="EC" id="4.2.99.18"/>
    </reaction>
</comment>
<comment type="biophysicochemical properties">
    <kinetics>
        <KM evidence="5 17 18">227 nM for dihydrouracil containing duplex oligonucleotides (N-glycosylase activity)</KM>
        <KM evidence="5 17 18">250 nM for 5-hydroxy-6-hydrothymine containing duplex oligonucleotides (N-glycosylase activity)</KM>
        <KM evidence="5 17 18">721 nM for 5-hydroxy-6-hydrouracil containing duplex oligonucleotides (N-glycosylase activity)</KM>
        <KM evidence="5 17 18">755 nM for 5-hydroxy-5-methylhydantoin containing duplex oligonucleotides (N-glycosylase activity)</KM>
        <KM evidence="5 17 18">997 nM for 5-hydroxyuracil containing duplex oligonucleotides (N-glycosylase activity)</KM>
        <KM evidence="5 17 18">1380 nM for 5-hydroxycytosine containing duplex oligonucleotides (N-glycosylase activity)</KM>
        <KM evidence="5 17 18">3250 nM for thymine glycol containing duplex oligonucleotides (N-glycosylase activity)</KM>
        <KM evidence="5 17 18">1305 nM for 2,6-diamino-4-hydroxy-5-formamidopyrimidine (FapyAde) containing duplex oligonucleotides (N-glycosylase activity)</KM>
        <KM evidence="5 17 18">2460 nM for 4,6-diamino-5-formamidopyrimidine (FapyGua) containing duplex oligonucleotides (N-glycosylase activity)</KM>
        <KM evidence="5 17 18">24.86 nM for AP/G abasic-site containing duplex oligonucleotides (AP lyase activity)</KM>
        <KM evidence="5 17 18">11.37 nM for AP/A abasic-site containing duplex oligonucleotides (AP lyase activity)</KM>
        <KM evidence="5 17 18">6.67 nM for AP/T abasic-site containing duplex oligonucleotides (AP lyase activity)</KM>
        <KM evidence="5 17 18">36.58 nM for AP/C abasic-site containing duplex oligonucleotides (AP lyase activity)</KM>
        <Vmax evidence="5 17 18">1.9 nmol/min/ng enzyme for dihydrouracil containing duplex oligonucleotides (N-glycosylase activity)</Vmax>
    </kinetics>
</comment>
<comment type="subcellular location">
    <subcellularLocation>
        <location evidence="2 3 4 10 12">Nucleus</location>
    </subcellularLocation>
    <subcellularLocation>
        <location evidence="2 3 4 10 12">Mitochondrion</location>
    </subcellularLocation>
    <text evidence="10 12">Relocalizes to organelles containing elevated oxidative DNA damage.</text>
</comment>
<comment type="induction">
    <text evidence="3 14 17">By oxidizing agents.</text>
</comment>
<comment type="PTM">
    <text evidence="10">Monosumoylated. Sumoylation is associated with targeting of NTG1 to nuclei containing oxidative DNA damage.</text>
</comment>
<comment type="disruption phenotype">
    <text evidence="3 7 8">Greatly increases spontaneous and hydrogen peroxide-induced mutation frequency. Causes mitochondrial genome instability. Suppresses mitochondrial point mutation rates, frameshifts and recombination rates, probably because NTG1 can generate mutagenic intermediates in yeast mitochondrial DNA.</text>
</comment>
<comment type="miscellaneous">
    <text evidence="20">Does not possess a consensus sequence for a C-terminal iron-sulfur center typical of all other endonuclease III homologs.</text>
</comment>
<comment type="similarity">
    <text evidence="2">Belongs to the Nth/MutY family.</text>
</comment>
<keyword id="KW-0227">DNA damage</keyword>
<keyword id="KW-0234">DNA repair</keyword>
<keyword id="KW-0326">Glycosidase</keyword>
<keyword id="KW-0378">Hydrolase</keyword>
<keyword id="KW-1017">Isopeptide bond</keyword>
<keyword id="KW-0456">Lyase</keyword>
<keyword id="KW-0496">Mitochondrion</keyword>
<keyword id="KW-0539">Nucleus</keyword>
<keyword id="KW-1185">Reference proteome</keyword>
<keyword id="KW-0809">Transit peptide</keyword>
<keyword id="KW-0832">Ubl conjugation</keyword>
<accession>P31378</accession>
<accession>D6VPK3</accession>
<dbReference type="EC" id="3.2.2.-" evidence="2"/>
<dbReference type="EC" id="4.2.99.18" evidence="2 5 12 16"/>
<dbReference type="EMBL" id="L05146">
    <property type="protein sequence ID" value="AAC04942.1"/>
    <property type="molecule type" value="Genomic_DNA"/>
</dbReference>
<dbReference type="EMBL" id="BK006935">
    <property type="protein sequence ID" value="DAA06973.1"/>
    <property type="molecule type" value="Genomic_DNA"/>
</dbReference>
<dbReference type="PIR" id="S36719">
    <property type="entry name" value="S36719"/>
</dbReference>
<dbReference type="RefSeq" id="NP_009387.1">
    <property type="nucleotide sequence ID" value="NM_001178160.1"/>
</dbReference>
<dbReference type="SMR" id="P31378"/>
<dbReference type="BioGRID" id="31751">
    <property type="interactions" value="114"/>
</dbReference>
<dbReference type="DIP" id="DIP-6614N"/>
<dbReference type="FunCoup" id="P31378">
    <property type="interactions" value="526"/>
</dbReference>
<dbReference type="IntAct" id="P31378">
    <property type="interactions" value="24"/>
</dbReference>
<dbReference type="STRING" id="4932.YAL015C"/>
<dbReference type="iPTMnet" id="P31378"/>
<dbReference type="PaxDb" id="4932-YAL015C"/>
<dbReference type="PeptideAtlas" id="P31378"/>
<dbReference type="TopDownProteomics" id="P31378"/>
<dbReference type="EnsemblFungi" id="YAL015C_mRNA">
    <property type="protein sequence ID" value="YAL015C"/>
    <property type="gene ID" value="YAL015C"/>
</dbReference>
<dbReference type="GeneID" id="851218"/>
<dbReference type="KEGG" id="sce:YAL015C"/>
<dbReference type="AGR" id="SGD:S000000013"/>
<dbReference type="SGD" id="S000000013">
    <property type="gene designation" value="NTG1"/>
</dbReference>
<dbReference type="VEuPathDB" id="FungiDB:YAL015C"/>
<dbReference type="eggNOG" id="KOG1921">
    <property type="taxonomic scope" value="Eukaryota"/>
</dbReference>
<dbReference type="GeneTree" id="ENSGT00510000047513"/>
<dbReference type="HOGENOM" id="CLU_012862_4_3_1"/>
<dbReference type="InParanoid" id="P31378"/>
<dbReference type="OMA" id="KLFKWVD"/>
<dbReference type="OrthoDB" id="2099276at2759"/>
<dbReference type="BioCyc" id="YEAST:G3O-28827-MONOMER"/>
<dbReference type="BioGRID-ORCS" id="851218">
    <property type="hits" value="2 hits in 10 CRISPR screens"/>
</dbReference>
<dbReference type="PRO" id="PR:P31378"/>
<dbReference type="Proteomes" id="UP000002311">
    <property type="component" value="Chromosome I"/>
</dbReference>
<dbReference type="RNAct" id="P31378">
    <property type="molecule type" value="protein"/>
</dbReference>
<dbReference type="GO" id="GO:0005739">
    <property type="term" value="C:mitochondrion"/>
    <property type="evidence" value="ECO:0000314"/>
    <property type="project" value="SGD"/>
</dbReference>
<dbReference type="GO" id="GO:0005634">
    <property type="term" value="C:nucleus"/>
    <property type="evidence" value="ECO:0000314"/>
    <property type="project" value="SGD"/>
</dbReference>
<dbReference type="GO" id="GO:0140078">
    <property type="term" value="F:class I DNA-(apurinic or apyrimidinic site) endonuclease activity"/>
    <property type="evidence" value="ECO:0007669"/>
    <property type="project" value="UniProtKB-EC"/>
</dbReference>
<dbReference type="GO" id="GO:0003677">
    <property type="term" value="F:DNA binding"/>
    <property type="evidence" value="ECO:0007669"/>
    <property type="project" value="UniProtKB-UniRule"/>
</dbReference>
<dbReference type="GO" id="GO:0003906">
    <property type="term" value="F:DNA-(apurinic or apyrimidinic site) endonuclease activity"/>
    <property type="evidence" value="ECO:0000314"/>
    <property type="project" value="SGD"/>
</dbReference>
<dbReference type="GO" id="GO:0008534">
    <property type="term" value="F:oxidized purine nucleobase lesion DNA N-glycosylase activity"/>
    <property type="evidence" value="ECO:0000314"/>
    <property type="project" value="SGD"/>
</dbReference>
<dbReference type="GO" id="GO:0000703">
    <property type="term" value="F:oxidized pyrimidine nucleobase lesion DNA N-glycosylase activity"/>
    <property type="evidence" value="ECO:0000314"/>
    <property type="project" value="SGD"/>
</dbReference>
<dbReference type="GO" id="GO:0006284">
    <property type="term" value="P:base-excision repair"/>
    <property type="evidence" value="ECO:0000314"/>
    <property type="project" value="SGD"/>
</dbReference>
<dbReference type="GO" id="GO:0006285">
    <property type="term" value="P:base-excision repair, AP site formation"/>
    <property type="evidence" value="ECO:0000314"/>
    <property type="project" value="SGD"/>
</dbReference>
<dbReference type="GO" id="GO:0034599">
    <property type="term" value="P:cellular response to oxidative stress"/>
    <property type="evidence" value="ECO:0000315"/>
    <property type="project" value="SGD"/>
</dbReference>
<dbReference type="GO" id="GO:0006281">
    <property type="term" value="P:DNA repair"/>
    <property type="evidence" value="ECO:0000314"/>
    <property type="project" value="SGD"/>
</dbReference>
<dbReference type="GO" id="GO:0006289">
    <property type="term" value="P:nucleotide-excision repair"/>
    <property type="evidence" value="ECO:0000318"/>
    <property type="project" value="GO_Central"/>
</dbReference>
<dbReference type="GO" id="GO:0090297">
    <property type="term" value="P:positive regulation of mitochondrial DNA replication"/>
    <property type="evidence" value="ECO:0000315"/>
    <property type="project" value="SGD"/>
</dbReference>
<dbReference type="CDD" id="cd00056">
    <property type="entry name" value="ENDO3c"/>
    <property type="match status" value="1"/>
</dbReference>
<dbReference type="FunFam" id="1.10.340.30:FF:000001">
    <property type="entry name" value="Endonuclease III"/>
    <property type="match status" value="1"/>
</dbReference>
<dbReference type="FunFam" id="1.10.1670.10:FF:000024">
    <property type="entry name" value="Endonuclease III homolog"/>
    <property type="match status" value="1"/>
</dbReference>
<dbReference type="Gene3D" id="1.10.1670.10">
    <property type="entry name" value="Helix-hairpin-Helix base-excision DNA repair enzymes (C-terminal)"/>
    <property type="match status" value="1"/>
</dbReference>
<dbReference type="Gene3D" id="1.10.340.30">
    <property type="entry name" value="Hypothetical protein, domain 2"/>
    <property type="match status" value="1"/>
</dbReference>
<dbReference type="HAMAP" id="MF_03183">
    <property type="entry name" value="Endonuclease_III_Nth"/>
    <property type="match status" value="1"/>
</dbReference>
<dbReference type="InterPro" id="IPR011257">
    <property type="entry name" value="DNA_glycosylase"/>
</dbReference>
<dbReference type="InterPro" id="IPR004036">
    <property type="entry name" value="Endonuclease-III-like_CS2"/>
</dbReference>
<dbReference type="InterPro" id="IPR003265">
    <property type="entry name" value="HhH-GPD_domain"/>
</dbReference>
<dbReference type="InterPro" id="IPR023170">
    <property type="entry name" value="HhH_base_excis_C"/>
</dbReference>
<dbReference type="InterPro" id="IPR000445">
    <property type="entry name" value="HhH_motif"/>
</dbReference>
<dbReference type="InterPro" id="IPR030841">
    <property type="entry name" value="NTH1"/>
</dbReference>
<dbReference type="PANTHER" id="PTHR43286">
    <property type="entry name" value="ENDONUCLEASE III-LIKE PROTEIN 1"/>
    <property type="match status" value="1"/>
</dbReference>
<dbReference type="PANTHER" id="PTHR43286:SF1">
    <property type="entry name" value="ENDONUCLEASE III-LIKE PROTEIN 1"/>
    <property type="match status" value="1"/>
</dbReference>
<dbReference type="Pfam" id="PF00633">
    <property type="entry name" value="HHH"/>
    <property type="match status" value="1"/>
</dbReference>
<dbReference type="Pfam" id="PF00730">
    <property type="entry name" value="HhH-GPD"/>
    <property type="match status" value="1"/>
</dbReference>
<dbReference type="SMART" id="SM00478">
    <property type="entry name" value="ENDO3c"/>
    <property type="match status" value="1"/>
</dbReference>
<dbReference type="SUPFAM" id="SSF48150">
    <property type="entry name" value="DNA-glycosylase"/>
    <property type="match status" value="1"/>
</dbReference>
<dbReference type="PROSITE" id="PS01155">
    <property type="entry name" value="ENDONUCLEASE_III_2"/>
    <property type="match status" value="1"/>
</dbReference>
<protein>
    <recommendedName>
        <fullName evidence="2">Endonuclease III homolog 1</fullName>
        <ecNumber evidence="2">3.2.2.-</ecNumber>
        <ecNumber evidence="2 5 12 16">4.2.99.18</ecNumber>
    </recommendedName>
    <alternativeName>
        <fullName evidence="2">Bifunctional DNA N-glycosylase/DNA-(apurinic or apyrimidinic site) lyase 1</fullName>
        <shortName evidence="2">DNA glycosylase/AP lyase 1</shortName>
    </alternativeName>
    <alternativeName>
        <fullName>Endonuclease III-like glycosylase 1</fullName>
    </alternativeName>
    <alternativeName>
        <fullName>Redoxyendonuclease 1</fullName>
    </alternativeName>
</protein>
<organism>
    <name type="scientific">Saccharomyces cerevisiae (strain ATCC 204508 / S288c)</name>
    <name type="common">Baker's yeast</name>
    <dbReference type="NCBI Taxonomy" id="559292"/>
    <lineage>
        <taxon>Eukaryota</taxon>
        <taxon>Fungi</taxon>
        <taxon>Dikarya</taxon>
        <taxon>Ascomycota</taxon>
        <taxon>Saccharomycotina</taxon>
        <taxon>Saccharomycetes</taxon>
        <taxon>Saccharomycetales</taxon>
        <taxon>Saccharomycetaceae</taxon>
        <taxon>Saccharomyces</taxon>
    </lineage>
</organism>
<reference key="1">
    <citation type="journal article" date="1993" name="Genome">
        <title>Sequencing of chromosome I from Saccharomyces cerevisiae: analysis of a 32 kb region between the LTE1 and SPO7 genes.</title>
        <authorList>
            <person name="Ouellette B.F.F."/>
            <person name="Clark M.W."/>
            <person name="Keng T."/>
            <person name="Storms R.K."/>
            <person name="Zhong W.-W."/>
            <person name="Zeng B."/>
            <person name="Fortin N."/>
            <person name="Delaney S."/>
            <person name="Barton A.B."/>
            <person name="Kaback D.B."/>
            <person name="Bussey H."/>
        </authorList>
    </citation>
    <scope>NUCLEOTIDE SEQUENCE [GENOMIC DNA]</scope>
    <source>
        <strain>ATCC 204511 / S288c / AB972</strain>
    </source>
</reference>
<reference key="2">
    <citation type="journal article" date="1994" name="J. Bacteriol.">
        <title>Molecular cloning of chromosome I DNA from Saccharomyces cerevisiae: analysis of the genes in the FUN38-MAK16-SPO7 region.</title>
        <authorList>
            <person name="Barton A.B."/>
            <person name="Kaback D.B."/>
        </authorList>
    </citation>
    <scope>NUCLEOTIDE SEQUENCE [GENOMIC DNA]</scope>
    <source>
        <strain>ATCC 204511 / S288c / AB972</strain>
    </source>
</reference>
<reference key="3">
    <citation type="journal article" date="1995" name="Proc. Natl. Acad. Sci. U.S.A.">
        <title>The nucleotide sequence of chromosome I from Saccharomyces cerevisiae.</title>
        <authorList>
            <person name="Bussey H."/>
            <person name="Kaback D.B."/>
            <person name="Zhong W.-W."/>
            <person name="Vo D.H."/>
            <person name="Clark M.W."/>
            <person name="Fortin N."/>
            <person name="Hall J."/>
            <person name="Ouellette B.F.F."/>
            <person name="Keng T."/>
            <person name="Barton A.B."/>
            <person name="Su Y."/>
            <person name="Davies C.J."/>
            <person name="Storms R.K."/>
        </authorList>
    </citation>
    <scope>NUCLEOTIDE SEQUENCE [LARGE SCALE GENOMIC DNA]</scope>
    <source>
        <strain>ATCC 204508 / S288c</strain>
    </source>
</reference>
<reference key="4">
    <citation type="journal article" date="2014" name="G3 (Bethesda)">
        <title>The reference genome sequence of Saccharomyces cerevisiae: Then and now.</title>
        <authorList>
            <person name="Engel S.R."/>
            <person name="Dietrich F.S."/>
            <person name="Fisk D.G."/>
            <person name="Binkley G."/>
            <person name="Balakrishnan R."/>
            <person name="Costanzo M.C."/>
            <person name="Dwight S.S."/>
            <person name="Hitz B.C."/>
            <person name="Karra K."/>
            <person name="Nash R.S."/>
            <person name="Weng S."/>
            <person name="Wong E.D."/>
            <person name="Lloyd P."/>
            <person name="Skrzypek M.S."/>
            <person name="Miyasato S.R."/>
            <person name="Simison M."/>
            <person name="Cherry J.M."/>
        </authorList>
    </citation>
    <scope>GENOME REANNOTATION</scope>
    <source>
        <strain>ATCC 204508 / S288c</strain>
    </source>
</reference>
<reference key="5">
    <citation type="journal article" date="1996" name="Curr. Biol.">
        <title>Cloning of a yeast 8-oxoguanine DNA glycosylase reveals the existence of a base-excision DNA-repair protein superfamily.</title>
        <authorList>
            <person name="Nash H.M."/>
            <person name="Bruner S.D."/>
            <person name="Scharer O.D."/>
            <person name="Kawate T."/>
            <person name="Addona T.A."/>
            <person name="Spooner E."/>
            <person name="Lane W.S."/>
            <person name="Verdine G.L."/>
        </authorList>
    </citation>
    <scope>FUNCTION</scope>
</reference>
<reference key="6">
    <citation type="journal article" date="1996" name="Proc. Natl. Acad. Sci. U.S.A.">
        <title>Base excision of oxidative purine and pyrimidine DNA damage in Saccharomyces cerevisiae by a DNA glycosylase with sequence similarity to endonuclease III from Escherichia coli.</title>
        <authorList>
            <person name="Eide L."/>
            <person name="Bjoras M."/>
            <person name="Pirovano M."/>
            <person name="Alseth I."/>
            <person name="Berdal K.G."/>
            <person name="Seeberg E."/>
        </authorList>
    </citation>
    <scope>FUNCTION</scope>
    <scope>INDUCTION BY DNA DAMAGE</scope>
</reference>
<reference key="7">
    <citation type="journal article" date="1997" name="Biochemistry">
        <title>Purification, characterization, gene cloning, and expression of Saccharomyces cerevisiae redoxyendonuclease, a homolog of Escherichia coli endonuclease III.</title>
        <authorList>
            <person name="Augeri L."/>
            <person name="Lee Y.M."/>
            <person name="Barton A.B."/>
            <person name="Doetsch P.W."/>
        </authorList>
    </citation>
    <scope>FUNCTION</scope>
</reference>
<reference key="8">
    <citation type="journal article" date="1998" name="Biochemistry">
        <title>Saccharomyces cerevisiae possesses two functional homologues of Escherichia coli endonuclease III.</title>
        <authorList>
            <person name="You H.J."/>
            <person name="Swanson R.L."/>
            <person name="Doetsch P.W."/>
        </authorList>
    </citation>
    <scope>FUNCTION</scope>
    <scope>SUBSTRATES</scope>
    <scope>INDUCTION</scope>
    <scope>BIOPHYSICOCHEMICAL PROPERTIES</scope>
</reference>
<reference key="9">
    <citation type="journal article" date="1998" name="Curr. Biol.">
        <title>Repair of oxidatively damaged guanine in Saccharomyces cerevisiae by an alternative pathway.</title>
        <authorList>
            <person name="Bruner S.D."/>
            <person name="Nash H.M."/>
            <person name="Lane W.S."/>
            <person name="Verdine G.L."/>
        </authorList>
    </citation>
    <scope>FUNCTION</scope>
    <scope>CATALYTIC ACTIVITY</scope>
</reference>
<reference key="10">
    <citation type="journal article" date="1998" name="Nucleic Acids Res.">
        <title>Substrate specificities of the ntg1 and ntg2 proteins of Saccharomyces cerevisiae for oxidized DNA bases are not identical.</title>
        <authorList>
            <person name="Senturker S."/>
            <person name="Auffret van der Kemp P."/>
            <person name="You H.J."/>
            <person name="Doetsch P.W."/>
            <person name="Dizdaroglu M."/>
            <person name="Boiteux S."/>
        </authorList>
    </citation>
    <scope>FUNCTION</scope>
    <scope>SUBSTRATES</scope>
    <scope>BIOPHYSICOCHEMICAL PROPERTIES</scope>
</reference>
<reference key="11">
    <citation type="journal article" date="1999" name="Biochemistry">
        <title>Saccharomyces cerevisiae Ntg1p and Ntg2p: broad specificity N-glycosylases for the repair of oxidative DNA damage in the nucleus and mitochondria.</title>
        <authorList>
            <person name="You H.J."/>
            <person name="Swanson R.L."/>
            <person name="Harrington C."/>
            <person name="Corbett A.H."/>
            <person name="Jinks-Robertson S."/>
            <person name="Sentuerker S."/>
            <person name="Wallace S.S."/>
            <person name="Boiteux S."/>
            <person name="Dizdaroglu M."/>
            <person name="Doetsch P.W."/>
        </authorList>
    </citation>
    <scope>FUNCTION</scope>
    <scope>SUBCELLULAR LOCATION</scope>
</reference>
<reference key="12">
    <citation type="journal article" date="1999" name="Mol. Cell. Biol.">
        <title>The Saccharomyces cerevisiae homologues of endonuclease III from Escherichia coli, Ntg1 and Ntg2, are both required for efficient repair of spontaneous and induced oxidative DNA damage in yeast.</title>
        <authorList>
            <person name="Alseth I."/>
            <person name="Eide L."/>
            <person name="Pirovano M."/>
            <person name="Rognes T."/>
            <person name="Seeberg E."/>
            <person name="Bjoras M."/>
        </authorList>
    </citation>
    <scope>FUNCTION IN OXIDATIVE DNA DAMAGE REPAIR</scope>
    <scope>SUBCELLULAR LOCATION</scope>
    <scope>DISRUPTION PHENOTYPE</scope>
    <scope>INDUCTION</scope>
</reference>
<reference key="13">
    <citation type="journal article" date="2003" name="Nucleic Acids Res.">
        <title>Characterization of AP lyase activities of Saccharomyces cerevisiae Ntg1p and Ntg2p: implications for biological function.</title>
        <authorList>
            <person name="Meadows K.L."/>
            <person name="Song B."/>
            <person name="Doetsch P.W."/>
        </authorList>
    </citation>
    <scope>FUNCTION</scope>
    <scope>CATALYTIC ACTIVITY</scope>
    <scope>BIOPHYSICOCHEMICAL PROPERTIES</scope>
</reference>
<reference key="14">
    <citation type="journal article" date="2004" name="DNA Repair">
        <title>Involvement of two endonuclease III homologs in the base excision repair pathway for the processing of DNA alkylation damage in Saccharomyces cerevisiae.</title>
        <authorList>
            <person name="Hanna M."/>
            <person name="Chow B.L."/>
            <person name="Morey N.J."/>
            <person name="Jinks-Robertson S."/>
            <person name="Doetsch P.W."/>
            <person name="Xiao W."/>
        </authorList>
    </citation>
    <scope>FUNCTION IN DNA ALKYLATION DAMAGE REPAIR</scope>
</reference>
<reference key="15">
    <citation type="journal article" date="2005" name="Mol. Cell. Biol.">
        <title>Oxidative DNA damage causes mitochondrial genomic instability in Saccharomyces cerevisiae.</title>
        <authorList>
            <person name="Doudican N.A."/>
            <person name="Song B."/>
            <person name="Shadel G.S."/>
            <person name="Doetsch P.W."/>
        </authorList>
    </citation>
    <scope>DISRUPTION PHENOTYPE</scope>
</reference>
<reference key="16">
    <citation type="journal article" date="2006" name="DNA Repair">
        <title>Ntg1p, the base excision repair protein, generates mutagenic intermediates in yeast mitochondrial DNA.</title>
        <authorList>
            <person name="Phadnis N."/>
            <person name="Mehta R."/>
            <person name="Meednu N."/>
            <person name="Sia E.A."/>
        </authorList>
    </citation>
    <scope>DISRUPTION PHENOTYPE</scope>
</reference>
<reference key="17">
    <citation type="journal article" date="2009" name="Biochim. Biophys. Acta">
        <title>Excision of the oxidatively formed 5-hydroxyhydantoin and 5-hydroxy-5-methylhydantoin pyrimidine lesions by Escherichia coli and Saccharomyces cerevisiae DNA N-glycosylases.</title>
        <authorList>
            <person name="Gasparutto D."/>
            <person name="Muller E."/>
            <person name="Boiteux S."/>
            <person name="Cadet J."/>
        </authorList>
    </citation>
    <scope>FUNCTION IN OXIDATIVE DNA DAMAGE REPAIR</scope>
    <scope>SUBSTRATES</scope>
</reference>
<reference key="18">
    <citation type="journal article" date="2009" name="Mol. Cell. Biol.">
        <title>Dynamic compartmentalization of base excision repair proteins in response to nuclear and mitochondrial oxidative stress.</title>
        <authorList>
            <person name="Griffiths L.M."/>
            <person name="Swartzlander D."/>
            <person name="Meadows K.L."/>
            <person name="Wilkinson K.D."/>
            <person name="Corbett A.H."/>
            <person name="Doetsch P.W."/>
        </authorList>
    </citation>
    <scope>SUBCELLULAR LOCATION</scope>
    <scope>SUMOYLATION</scope>
    <scope>MUTAGENESIS OF LYS-364</scope>
</reference>
<reference key="19">
    <citation type="journal article" date="2009" name="Nucleic Acids Res.">
        <title>Reactive oxygen species regulate DNA copy number in isolated yeast mitochondria by triggering recombination-mediated replication.</title>
        <authorList>
            <person name="Hori A."/>
            <person name="Yoshida M."/>
            <person name="Shibata T."/>
            <person name="Ling F."/>
        </authorList>
    </citation>
    <scope>FUNCTION IN MTDNA REPLICATION</scope>
</reference>
<reference key="20">
    <citation type="journal article" date="2010" name="Nucleic Acids Res.">
        <title>Regulation of base excision repair: Ntg1 nuclear and mitochondrial dynamic localization in response to genotoxic stress.</title>
        <authorList>
            <person name="Swartzlander D.B."/>
            <person name="Griffiths L.M."/>
            <person name="Lee J."/>
            <person name="Degtyareva N.P."/>
            <person name="Doetsch P.W."/>
            <person name="Corbett A.H."/>
        </authorList>
    </citation>
    <scope>FUNCTION</scope>
    <scope>CATALYTIC ACTIVITY</scope>
    <scope>SUBCELLULAR LOCATION</scope>
    <scope>MUTAGENESIS OF 3-LYS--LYS-6; 15-LYS-ARG-16; 33-LYS-ARG-34 AND LYS-243</scope>
</reference>
<feature type="transit peptide" description="Mitochondrion" evidence="2">
    <location>
        <begin position="1"/>
        <end position="26"/>
    </location>
</feature>
<feature type="chain" id="PRO_0000001744" description="Endonuclease III homolog 1">
    <location>
        <begin position="27"/>
        <end position="399"/>
    </location>
</feature>
<feature type="domain" description="HhH" evidence="2">
    <location>
        <begin position="223"/>
        <end position="247"/>
    </location>
</feature>
<feature type="short sequence motif" description="Bipartite nuclear localization signal" evidence="1">
    <location>
        <begin position="14"/>
        <end position="37"/>
    </location>
</feature>
<feature type="active site" description="Nucleophile; for N-glycosylase activity" evidence="2">
    <location>
        <position position="243"/>
    </location>
</feature>
<feature type="site" description="Important for catalytic activity" evidence="2">
    <location>
        <position position="262"/>
    </location>
</feature>
<feature type="cross-link" description="Glycyl lysine isopeptide (Lys-Gly) (interchain with G-Cter in SUMO)" evidence="19">
    <location>
        <position position="194"/>
    </location>
</feature>
<feature type="mutagenesis site" description="In NTG1(mts); reduces mitochondrial localization by 40%." evidence="12">
    <original>KISK</original>
    <variation>EISE</variation>
    <location>
        <begin position="3"/>
        <end position="6"/>
    </location>
</feature>
<feature type="mutagenesis site" description="In NTG1(nls1); reduces nuclear localization by 60%." evidence="12">
    <original>KR</original>
    <variation>AA</variation>
    <location>
        <begin position="15"/>
        <end position="16"/>
    </location>
</feature>
<feature type="mutagenesis site" description="In NTG1(nls2); reduces nuclear localization by 60%." evidence="12">
    <original>KR</original>
    <variation>AA</variation>
    <location>
        <begin position="33"/>
        <end position="34"/>
    </location>
</feature>
<feature type="mutagenesis site" description="Abolishes cleavage of substrate oligonucleotides." evidence="12">
    <original>K</original>
    <variation>Q</variation>
    <location>
        <position position="243"/>
    </location>
</feature>
<feature type="mutagenesis site" description="Cannot properly relocalize in response to oxidative stress." evidence="10">
    <original>K</original>
    <variation>R</variation>
    <location>
        <position position="364"/>
    </location>
</feature>
<proteinExistence type="evidence at protein level"/>
<name>NTH1_YEAST</name>